<feature type="chain" id="PRO_1000020238" description="1-deoxy-D-xylulose 5-phosphate reductoisomerase">
    <location>
        <begin position="1"/>
        <end position="359"/>
    </location>
</feature>
<feature type="binding site" evidence="1">
    <location>
        <position position="7"/>
    </location>
    <ligand>
        <name>NADPH</name>
        <dbReference type="ChEBI" id="CHEBI:57783"/>
    </ligand>
</feature>
<feature type="binding site" evidence="1">
    <location>
        <position position="8"/>
    </location>
    <ligand>
        <name>NADPH</name>
        <dbReference type="ChEBI" id="CHEBI:57783"/>
    </ligand>
</feature>
<feature type="binding site" evidence="1">
    <location>
        <position position="9"/>
    </location>
    <ligand>
        <name>NADPH</name>
        <dbReference type="ChEBI" id="CHEBI:57783"/>
    </ligand>
</feature>
<feature type="binding site" evidence="1">
    <location>
        <position position="10"/>
    </location>
    <ligand>
        <name>NADPH</name>
        <dbReference type="ChEBI" id="CHEBI:57783"/>
    </ligand>
</feature>
<feature type="binding site" evidence="1">
    <location>
        <position position="31"/>
    </location>
    <ligand>
        <name>NADPH</name>
        <dbReference type="ChEBI" id="CHEBI:57783"/>
    </ligand>
</feature>
<feature type="binding site" evidence="1">
    <location>
        <position position="33"/>
    </location>
    <ligand>
        <name>NADPH</name>
        <dbReference type="ChEBI" id="CHEBI:57783"/>
    </ligand>
</feature>
<feature type="binding site" evidence="1">
    <location>
        <position position="111"/>
    </location>
    <ligand>
        <name>NADPH</name>
        <dbReference type="ChEBI" id="CHEBI:57783"/>
    </ligand>
</feature>
<feature type="binding site" evidence="1">
    <location>
        <position position="112"/>
    </location>
    <ligand>
        <name>1-deoxy-D-xylulose 5-phosphate</name>
        <dbReference type="ChEBI" id="CHEBI:57792"/>
    </ligand>
</feature>
<feature type="binding site" evidence="1">
    <location>
        <position position="113"/>
    </location>
    <ligand>
        <name>NADPH</name>
        <dbReference type="ChEBI" id="CHEBI:57783"/>
    </ligand>
</feature>
<feature type="binding site" evidence="1">
    <location>
        <position position="131"/>
    </location>
    <ligand>
        <name>Mn(2+)</name>
        <dbReference type="ChEBI" id="CHEBI:29035"/>
    </ligand>
</feature>
<feature type="binding site" evidence="1">
    <location>
        <position position="132"/>
    </location>
    <ligand>
        <name>1-deoxy-D-xylulose 5-phosphate</name>
        <dbReference type="ChEBI" id="CHEBI:57792"/>
    </ligand>
</feature>
<feature type="binding site" evidence="1">
    <location>
        <position position="133"/>
    </location>
    <ligand>
        <name>1-deoxy-D-xylulose 5-phosphate</name>
        <dbReference type="ChEBI" id="CHEBI:57792"/>
    </ligand>
</feature>
<feature type="binding site" evidence="1">
    <location>
        <position position="133"/>
    </location>
    <ligand>
        <name>Mn(2+)</name>
        <dbReference type="ChEBI" id="CHEBI:29035"/>
    </ligand>
</feature>
<feature type="binding site" evidence="1">
    <location>
        <position position="155"/>
    </location>
    <ligand>
        <name>1-deoxy-D-xylulose 5-phosphate</name>
        <dbReference type="ChEBI" id="CHEBI:57792"/>
    </ligand>
</feature>
<feature type="binding site" evidence="1">
    <location>
        <position position="178"/>
    </location>
    <ligand>
        <name>1-deoxy-D-xylulose 5-phosphate</name>
        <dbReference type="ChEBI" id="CHEBI:57792"/>
    </ligand>
</feature>
<feature type="binding site" evidence="1">
    <location>
        <position position="184"/>
    </location>
    <ligand>
        <name>NADPH</name>
        <dbReference type="ChEBI" id="CHEBI:57783"/>
    </ligand>
</feature>
<feature type="binding site" evidence="1">
    <location>
        <position position="191"/>
    </location>
    <ligand>
        <name>1-deoxy-D-xylulose 5-phosphate</name>
        <dbReference type="ChEBI" id="CHEBI:57792"/>
    </ligand>
</feature>
<feature type="binding site" evidence="1">
    <location>
        <position position="196"/>
    </location>
    <ligand>
        <name>1-deoxy-D-xylulose 5-phosphate</name>
        <dbReference type="ChEBI" id="CHEBI:57792"/>
    </ligand>
</feature>
<feature type="binding site" evidence="1">
    <location>
        <position position="197"/>
    </location>
    <ligand>
        <name>1-deoxy-D-xylulose 5-phosphate</name>
        <dbReference type="ChEBI" id="CHEBI:57792"/>
    </ligand>
</feature>
<feature type="binding site" evidence="1">
    <location>
        <position position="200"/>
    </location>
    <ligand>
        <name>1-deoxy-D-xylulose 5-phosphate</name>
        <dbReference type="ChEBI" id="CHEBI:57792"/>
    </ligand>
</feature>
<feature type="binding site" evidence="1">
    <location>
        <position position="200"/>
    </location>
    <ligand>
        <name>Mn(2+)</name>
        <dbReference type="ChEBI" id="CHEBI:29035"/>
    </ligand>
</feature>
<reference key="1">
    <citation type="submission" date="2007-07" db="EMBL/GenBank/DDBJ databases">
        <title>Complete genome sequence of Campylobacter hominis ATCC BAA-381, a commensal isolated from the human gastrointestinal tract.</title>
        <authorList>
            <person name="Fouts D.E."/>
            <person name="Mongodin E.F."/>
            <person name="Puiu D."/>
            <person name="Sebastian Y."/>
            <person name="Miller W.G."/>
            <person name="Mandrell R.E."/>
            <person name="Nelson K.E."/>
        </authorList>
    </citation>
    <scope>NUCLEOTIDE SEQUENCE [LARGE SCALE GENOMIC DNA]</scope>
    <source>
        <strain>ATCC BAA-381 / DSM 21671 / CCUG 45161 / LMG 19568 / NCTC 13146 / CH001A</strain>
    </source>
</reference>
<proteinExistence type="inferred from homology"/>
<name>DXR_CAMHC</name>
<evidence type="ECO:0000255" key="1">
    <source>
        <dbReference type="HAMAP-Rule" id="MF_00183"/>
    </source>
</evidence>
<dbReference type="EC" id="1.1.1.267" evidence="1"/>
<dbReference type="EMBL" id="CP000776">
    <property type="protein sequence ID" value="ABS51413.1"/>
    <property type="molecule type" value="Genomic_DNA"/>
</dbReference>
<dbReference type="RefSeq" id="WP_011991581.1">
    <property type="nucleotide sequence ID" value="NC_009714.1"/>
</dbReference>
<dbReference type="SMR" id="A7HZP3"/>
<dbReference type="STRING" id="360107.CHAB381_0121"/>
<dbReference type="KEGG" id="cha:CHAB381_0121"/>
<dbReference type="eggNOG" id="COG0743">
    <property type="taxonomic scope" value="Bacteria"/>
</dbReference>
<dbReference type="HOGENOM" id="CLU_035714_0_0_7"/>
<dbReference type="OrthoDB" id="9806546at2"/>
<dbReference type="UniPathway" id="UPA00056">
    <property type="reaction ID" value="UER00092"/>
</dbReference>
<dbReference type="Proteomes" id="UP000002407">
    <property type="component" value="Chromosome"/>
</dbReference>
<dbReference type="GO" id="GO:0030604">
    <property type="term" value="F:1-deoxy-D-xylulose-5-phosphate reductoisomerase activity"/>
    <property type="evidence" value="ECO:0007669"/>
    <property type="project" value="UniProtKB-UniRule"/>
</dbReference>
<dbReference type="GO" id="GO:0030145">
    <property type="term" value="F:manganese ion binding"/>
    <property type="evidence" value="ECO:0007669"/>
    <property type="project" value="TreeGrafter"/>
</dbReference>
<dbReference type="GO" id="GO:0070402">
    <property type="term" value="F:NADPH binding"/>
    <property type="evidence" value="ECO:0007669"/>
    <property type="project" value="InterPro"/>
</dbReference>
<dbReference type="GO" id="GO:0051484">
    <property type="term" value="P:isopentenyl diphosphate biosynthetic process, methylerythritol 4-phosphate pathway involved in terpenoid biosynthetic process"/>
    <property type="evidence" value="ECO:0007669"/>
    <property type="project" value="TreeGrafter"/>
</dbReference>
<dbReference type="Gene3D" id="1.10.1740.10">
    <property type="match status" value="1"/>
</dbReference>
<dbReference type="Gene3D" id="3.40.50.720">
    <property type="entry name" value="NAD(P)-binding Rossmann-like Domain"/>
    <property type="match status" value="1"/>
</dbReference>
<dbReference type="HAMAP" id="MF_00183">
    <property type="entry name" value="DXP_reductoisom"/>
    <property type="match status" value="1"/>
</dbReference>
<dbReference type="InterPro" id="IPR003821">
    <property type="entry name" value="DXP_reductoisomerase"/>
</dbReference>
<dbReference type="InterPro" id="IPR013644">
    <property type="entry name" value="DXP_reductoisomerase_C"/>
</dbReference>
<dbReference type="InterPro" id="IPR013512">
    <property type="entry name" value="DXP_reductoisomerase_N"/>
</dbReference>
<dbReference type="InterPro" id="IPR026877">
    <property type="entry name" value="DXPR_C"/>
</dbReference>
<dbReference type="InterPro" id="IPR036169">
    <property type="entry name" value="DXPR_C_sf"/>
</dbReference>
<dbReference type="InterPro" id="IPR036291">
    <property type="entry name" value="NAD(P)-bd_dom_sf"/>
</dbReference>
<dbReference type="NCBIfam" id="TIGR00243">
    <property type="entry name" value="Dxr"/>
    <property type="match status" value="1"/>
</dbReference>
<dbReference type="PANTHER" id="PTHR30525">
    <property type="entry name" value="1-DEOXY-D-XYLULOSE 5-PHOSPHATE REDUCTOISOMERASE"/>
    <property type="match status" value="1"/>
</dbReference>
<dbReference type="PANTHER" id="PTHR30525:SF0">
    <property type="entry name" value="1-DEOXY-D-XYLULOSE 5-PHOSPHATE REDUCTOISOMERASE, CHLOROPLASTIC"/>
    <property type="match status" value="1"/>
</dbReference>
<dbReference type="Pfam" id="PF08436">
    <property type="entry name" value="DXP_redisom_C"/>
    <property type="match status" value="1"/>
</dbReference>
<dbReference type="Pfam" id="PF02670">
    <property type="entry name" value="DXP_reductoisom"/>
    <property type="match status" value="1"/>
</dbReference>
<dbReference type="Pfam" id="PF13288">
    <property type="entry name" value="DXPR_C"/>
    <property type="match status" value="1"/>
</dbReference>
<dbReference type="PIRSF" id="PIRSF006205">
    <property type="entry name" value="Dxp_reductismrs"/>
    <property type="match status" value="1"/>
</dbReference>
<dbReference type="SUPFAM" id="SSF69055">
    <property type="entry name" value="1-deoxy-D-xylulose-5-phosphate reductoisomerase, C-terminal domain"/>
    <property type="match status" value="1"/>
</dbReference>
<dbReference type="SUPFAM" id="SSF55347">
    <property type="entry name" value="Glyceraldehyde-3-phosphate dehydrogenase-like, C-terminal domain"/>
    <property type="match status" value="1"/>
</dbReference>
<dbReference type="SUPFAM" id="SSF51735">
    <property type="entry name" value="NAD(P)-binding Rossmann-fold domains"/>
    <property type="match status" value="1"/>
</dbReference>
<keyword id="KW-0414">Isoprene biosynthesis</keyword>
<keyword id="KW-0464">Manganese</keyword>
<keyword id="KW-0479">Metal-binding</keyword>
<keyword id="KW-0521">NADP</keyword>
<keyword id="KW-0560">Oxidoreductase</keyword>
<keyword id="KW-1185">Reference proteome</keyword>
<protein>
    <recommendedName>
        <fullName evidence="1">1-deoxy-D-xylulose 5-phosphate reductoisomerase</fullName>
        <shortName evidence="1">DXP reductoisomerase</shortName>
        <ecNumber evidence="1">1.1.1.267</ecNumber>
    </recommendedName>
    <alternativeName>
        <fullName evidence="1">1-deoxyxylulose-5-phosphate reductoisomerase</fullName>
    </alternativeName>
    <alternativeName>
        <fullName evidence="1">2-C-methyl-D-erythritol 4-phosphate synthase</fullName>
    </alternativeName>
</protein>
<accession>A7HZP3</accession>
<organism>
    <name type="scientific">Campylobacter hominis (strain ATCC BAA-381 / DSM 21671 / CCUG 45161 / LMG 19568 / NCTC 13146 / CH001A)</name>
    <dbReference type="NCBI Taxonomy" id="360107"/>
    <lineage>
        <taxon>Bacteria</taxon>
        <taxon>Pseudomonadati</taxon>
        <taxon>Campylobacterota</taxon>
        <taxon>Epsilonproteobacteria</taxon>
        <taxon>Campylobacterales</taxon>
        <taxon>Campylobacteraceae</taxon>
        <taxon>Campylobacter</taxon>
    </lineage>
</organism>
<gene>
    <name evidence="1" type="primary">dxr</name>
    <name type="ordered locus">CHAB381_0121</name>
</gene>
<sequence>MVVLGSTGSIGTNSLEIARKFNIEVEALACAENVKKLNAQIAEFHPKFVYIKDEKLKSKVAHNKIFSGENGICEMLNRCESKTVINALVGFAGLIPSLKIQNSGKILCLSNKESLVVGGKFLDTSKIRAIDSEHFGLKFLLENSAKPAKMIITASGGAFYKTPIKDLSSKKAADALKHPNWNMGAKITIDSATMANKLFEMLEAFWLYGCKNLDALIEPSSSVHALIEFIDGSTAAHLSRTDMKLAIAHAILPNLKSEILKPVDLLSLNLKFEKIDIKKYPIFELKDEVLSNPDLGVIINAANEIAVFAFLQGKCGFLDISSTIFKAVEKFNDLTPENAEDLIKIDKIVRNFARSELRL</sequence>
<comment type="function">
    <text evidence="1">Catalyzes the NADPH-dependent rearrangement and reduction of 1-deoxy-D-xylulose-5-phosphate (DXP) to 2-C-methyl-D-erythritol 4-phosphate (MEP).</text>
</comment>
<comment type="catalytic activity">
    <reaction evidence="1">
        <text>2-C-methyl-D-erythritol 4-phosphate + NADP(+) = 1-deoxy-D-xylulose 5-phosphate + NADPH + H(+)</text>
        <dbReference type="Rhea" id="RHEA:13717"/>
        <dbReference type="ChEBI" id="CHEBI:15378"/>
        <dbReference type="ChEBI" id="CHEBI:57783"/>
        <dbReference type="ChEBI" id="CHEBI:57792"/>
        <dbReference type="ChEBI" id="CHEBI:58262"/>
        <dbReference type="ChEBI" id="CHEBI:58349"/>
        <dbReference type="EC" id="1.1.1.267"/>
    </reaction>
    <physiologicalReaction direction="right-to-left" evidence="1">
        <dbReference type="Rhea" id="RHEA:13719"/>
    </physiologicalReaction>
</comment>
<comment type="cofactor">
    <cofactor evidence="1">
        <name>Mg(2+)</name>
        <dbReference type="ChEBI" id="CHEBI:18420"/>
    </cofactor>
    <cofactor evidence="1">
        <name>Mn(2+)</name>
        <dbReference type="ChEBI" id="CHEBI:29035"/>
    </cofactor>
</comment>
<comment type="pathway">
    <text evidence="1">Isoprenoid biosynthesis; isopentenyl diphosphate biosynthesis via DXP pathway; isopentenyl diphosphate from 1-deoxy-D-xylulose 5-phosphate: step 1/6.</text>
</comment>
<comment type="similarity">
    <text evidence="1">Belongs to the DXR family.</text>
</comment>